<feature type="chain" id="PRO_0000134001" description="Enolase">
    <location>
        <begin position="1"/>
        <end position="428"/>
    </location>
</feature>
<feature type="active site" description="Proton donor" evidence="1">
    <location>
        <position position="205"/>
    </location>
</feature>
<feature type="active site" description="Proton acceptor" evidence="1">
    <location>
        <position position="336"/>
    </location>
</feature>
<feature type="binding site" evidence="1">
    <location>
        <position position="163"/>
    </location>
    <ligand>
        <name>(2R)-2-phosphoglycerate</name>
        <dbReference type="ChEBI" id="CHEBI:58289"/>
    </ligand>
</feature>
<feature type="binding site" evidence="1">
    <location>
        <position position="242"/>
    </location>
    <ligand>
        <name>Mg(2+)</name>
        <dbReference type="ChEBI" id="CHEBI:18420"/>
    </ligand>
</feature>
<feature type="binding site" evidence="1">
    <location>
        <position position="284"/>
    </location>
    <ligand>
        <name>Mg(2+)</name>
        <dbReference type="ChEBI" id="CHEBI:18420"/>
    </ligand>
</feature>
<feature type="binding site" evidence="1">
    <location>
        <position position="311"/>
    </location>
    <ligand>
        <name>Mg(2+)</name>
        <dbReference type="ChEBI" id="CHEBI:18420"/>
    </ligand>
</feature>
<feature type="binding site" evidence="1">
    <location>
        <position position="336"/>
    </location>
    <ligand>
        <name>(2R)-2-phosphoglycerate</name>
        <dbReference type="ChEBI" id="CHEBI:58289"/>
    </ligand>
</feature>
<feature type="binding site" evidence="1">
    <location>
        <position position="365"/>
    </location>
    <ligand>
        <name>(2R)-2-phosphoglycerate</name>
        <dbReference type="ChEBI" id="CHEBI:58289"/>
    </ligand>
</feature>
<feature type="binding site" evidence="1">
    <location>
        <position position="366"/>
    </location>
    <ligand>
        <name>(2R)-2-phosphoglycerate</name>
        <dbReference type="ChEBI" id="CHEBI:58289"/>
    </ligand>
</feature>
<feature type="binding site" evidence="1">
    <location>
        <position position="387"/>
    </location>
    <ligand>
        <name>(2R)-2-phosphoglycerate</name>
        <dbReference type="ChEBI" id="CHEBI:58289"/>
    </ligand>
</feature>
<dbReference type="EC" id="4.2.1.11" evidence="1"/>
<dbReference type="EMBL" id="AE014184">
    <property type="protein sequence ID" value="AAO44880.1"/>
    <property type="status" value="ALT_INIT"/>
    <property type="molecule type" value="Genomic_DNA"/>
</dbReference>
<dbReference type="RefSeq" id="WP_011096730.1">
    <property type="nucleotide sequence ID" value="NC_004572.3"/>
</dbReference>
<dbReference type="SMR" id="Q83FF7"/>
<dbReference type="STRING" id="203267.TWT_783"/>
<dbReference type="GeneID" id="67388574"/>
<dbReference type="KEGG" id="twh:TWT_783"/>
<dbReference type="eggNOG" id="COG0148">
    <property type="taxonomic scope" value="Bacteria"/>
</dbReference>
<dbReference type="HOGENOM" id="CLU_031223_2_1_11"/>
<dbReference type="OrthoDB" id="9804716at2"/>
<dbReference type="UniPathway" id="UPA00109">
    <property type="reaction ID" value="UER00187"/>
</dbReference>
<dbReference type="Proteomes" id="UP000002200">
    <property type="component" value="Chromosome"/>
</dbReference>
<dbReference type="GO" id="GO:0009986">
    <property type="term" value="C:cell surface"/>
    <property type="evidence" value="ECO:0007669"/>
    <property type="project" value="UniProtKB-SubCell"/>
</dbReference>
<dbReference type="GO" id="GO:0005576">
    <property type="term" value="C:extracellular region"/>
    <property type="evidence" value="ECO:0007669"/>
    <property type="project" value="UniProtKB-SubCell"/>
</dbReference>
<dbReference type="GO" id="GO:0000015">
    <property type="term" value="C:phosphopyruvate hydratase complex"/>
    <property type="evidence" value="ECO:0007669"/>
    <property type="project" value="InterPro"/>
</dbReference>
<dbReference type="GO" id="GO:0000287">
    <property type="term" value="F:magnesium ion binding"/>
    <property type="evidence" value="ECO:0007669"/>
    <property type="project" value="UniProtKB-UniRule"/>
</dbReference>
<dbReference type="GO" id="GO:0004634">
    <property type="term" value="F:phosphopyruvate hydratase activity"/>
    <property type="evidence" value="ECO:0007669"/>
    <property type="project" value="UniProtKB-UniRule"/>
</dbReference>
<dbReference type="GO" id="GO:0006096">
    <property type="term" value="P:glycolytic process"/>
    <property type="evidence" value="ECO:0007669"/>
    <property type="project" value="UniProtKB-UniRule"/>
</dbReference>
<dbReference type="CDD" id="cd03313">
    <property type="entry name" value="enolase"/>
    <property type="match status" value="1"/>
</dbReference>
<dbReference type="FunFam" id="3.20.20.120:FF:000001">
    <property type="entry name" value="Enolase"/>
    <property type="match status" value="1"/>
</dbReference>
<dbReference type="FunFam" id="3.30.390.10:FF:000001">
    <property type="entry name" value="Enolase"/>
    <property type="match status" value="1"/>
</dbReference>
<dbReference type="Gene3D" id="3.20.20.120">
    <property type="entry name" value="Enolase-like C-terminal domain"/>
    <property type="match status" value="1"/>
</dbReference>
<dbReference type="Gene3D" id="3.30.390.10">
    <property type="entry name" value="Enolase-like, N-terminal domain"/>
    <property type="match status" value="1"/>
</dbReference>
<dbReference type="HAMAP" id="MF_00318">
    <property type="entry name" value="Enolase"/>
    <property type="match status" value="1"/>
</dbReference>
<dbReference type="InterPro" id="IPR000941">
    <property type="entry name" value="Enolase"/>
</dbReference>
<dbReference type="InterPro" id="IPR036849">
    <property type="entry name" value="Enolase-like_C_sf"/>
</dbReference>
<dbReference type="InterPro" id="IPR029017">
    <property type="entry name" value="Enolase-like_N"/>
</dbReference>
<dbReference type="InterPro" id="IPR020810">
    <property type="entry name" value="Enolase_C"/>
</dbReference>
<dbReference type="InterPro" id="IPR020809">
    <property type="entry name" value="Enolase_CS"/>
</dbReference>
<dbReference type="InterPro" id="IPR020811">
    <property type="entry name" value="Enolase_N"/>
</dbReference>
<dbReference type="NCBIfam" id="TIGR01060">
    <property type="entry name" value="eno"/>
    <property type="match status" value="1"/>
</dbReference>
<dbReference type="PANTHER" id="PTHR11902">
    <property type="entry name" value="ENOLASE"/>
    <property type="match status" value="1"/>
</dbReference>
<dbReference type="PANTHER" id="PTHR11902:SF1">
    <property type="entry name" value="ENOLASE"/>
    <property type="match status" value="1"/>
</dbReference>
<dbReference type="Pfam" id="PF00113">
    <property type="entry name" value="Enolase_C"/>
    <property type="match status" value="1"/>
</dbReference>
<dbReference type="Pfam" id="PF03952">
    <property type="entry name" value="Enolase_N"/>
    <property type="match status" value="1"/>
</dbReference>
<dbReference type="PIRSF" id="PIRSF001400">
    <property type="entry name" value="Enolase"/>
    <property type="match status" value="1"/>
</dbReference>
<dbReference type="PRINTS" id="PR00148">
    <property type="entry name" value="ENOLASE"/>
</dbReference>
<dbReference type="SFLD" id="SFLDS00001">
    <property type="entry name" value="Enolase"/>
    <property type="match status" value="1"/>
</dbReference>
<dbReference type="SFLD" id="SFLDF00002">
    <property type="entry name" value="enolase"/>
    <property type="match status" value="1"/>
</dbReference>
<dbReference type="SMART" id="SM01192">
    <property type="entry name" value="Enolase_C"/>
    <property type="match status" value="1"/>
</dbReference>
<dbReference type="SMART" id="SM01193">
    <property type="entry name" value="Enolase_N"/>
    <property type="match status" value="1"/>
</dbReference>
<dbReference type="SUPFAM" id="SSF51604">
    <property type="entry name" value="Enolase C-terminal domain-like"/>
    <property type="match status" value="1"/>
</dbReference>
<dbReference type="SUPFAM" id="SSF54826">
    <property type="entry name" value="Enolase N-terminal domain-like"/>
    <property type="match status" value="1"/>
</dbReference>
<dbReference type="PROSITE" id="PS00164">
    <property type="entry name" value="ENOLASE"/>
    <property type="match status" value="1"/>
</dbReference>
<protein>
    <recommendedName>
        <fullName evidence="1">Enolase</fullName>
        <ecNumber evidence="1">4.2.1.11</ecNumber>
    </recommendedName>
    <alternativeName>
        <fullName evidence="1">2-phospho-D-glycerate hydro-lyase</fullName>
    </alternativeName>
    <alternativeName>
        <fullName evidence="1">2-phosphoglycerate dehydratase</fullName>
    </alternativeName>
</protein>
<gene>
    <name evidence="1" type="primary">eno</name>
    <name type="ordered locus">TWT_783</name>
</gene>
<organism>
    <name type="scientific">Tropheryma whipplei (strain Twist)</name>
    <name type="common">Whipple's bacillus</name>
    <dbReference type="NCBI Taxonomy" id="203267"/>
    <lineage>
        <taxon>Bacteria</taxon>
        <taxon>Bacillati</taxon>
        <taxon>Actinomycetota</taxon>
        <taxon>Actinomycetes</taxon>
        <taxon>Micrococcales</taxon>
        <taxon>Tropherymataceae</taxon>
        <taxon>Tropheryma</taxon>
    </lineage>
</organism>
<reference key="1">
    <citation type="journal article" date="2003" name="Genome Res.">
        <title>Tropheryma whipplei twist: a human pathogenic Actinobacteria with a reduced genome.</title>
        <authorList>
            <person name="Raoult D."/>
            <person name="Ogata H."/>
            <person name="Audic S."/>
            <person name="Robert C."/>
            <person name="Suhre K."/>
            <person name="Drancourt M."/>
            <person name="Claverie J.-M."/>
        </authorList>
    </citation>
    <scope>NUCLEOTIDE SEQUENCE [LARGE SCALE GENOMIC DNA]</scope>
    <source>
        <strain>Twist</strain>
    </source>
</reference>
<name>ENO_TROWT</name>
<evidence type="ECO:0000255" key="1">
    <source>
        <dbReference type="HAMAP-Rule" id="MF_00318"/>
    </source>
</evidence>
<evidence type="ECO:0000305" key="2"/>
<sequence>MCLIDSVHARQILDSRGTPTVEVEVTLEDGSMGRSAVPSGASTGAFEAHELRDQDNNEYLGKGVTRAVRSVNSEIAPVLIGFDAFDQVGLDHRMIELDGTNNKSRLGANAILGVSLASASAAARAADLSLFRYLGGPSSRILPVPMMNIINGGAHADTGVDIQEFMILPVGARSFSESLRWGCEVYHSLKVQLRESGLSSGLGDEGGFAPALRSNRTALDLILSAIEKAGFSPGIDIVLALDIAASEFCKAPGHYRFEGKDITSDELISYYEGLLSSYPLVSIEDPLDQDDWEGYRTLTTHIGDRVQIVGDDLFVTNTSRLSRGIQSGVANSILVKVNQIGTLTETFDAVDMAAKGGYTAVLSHRSGETEDTTIADMAVATNCGQIKTGAPARGERIAKYNQLLRIEEKLGRSARYAGWLSYPRWQGK</sequence>
<comment type="function">
    <text evidence="1">Catalyzes the reversible conversion of 2-phosphoglycerate (2-PG) into phosphoenolpyruvate (PEP). It is essential for the degradation of carbohydrates via glycolysis.</text>
</comment>
<comment type="catalytic activity">
    <reaction evidence="1">
        <text>(2R)-2-phosphoglycerate = phosphoenolpyruvate + H2O</text>
        <dbReference type="Rhea" id="RHEA:10164"/>
        <dbReference type="ChEBI" id="CHEBI:15377"/>
        <dbReference type="ChEBI" id="CHEBI:58289"/>
        <dbReference type="ChEBI" id="CHEBI:58702"/>
        <dbReference type="EC" id="4.2.1.11"/>
    </reaction>
</comment>
<comment type="cofactor">
    <cofactor evidence="1">
        <name>Mg(2+)</name>
        <dbReference type="ChEBI" id="CHEBI:18420"/>
    </cofactor>
    <text evidence="1">Binds a second Mg(2+) ion via substrate during catalysis.</text>
</comment>
<comment type="pathway">
    <text evidence="1">Carbohydrate degradation; glycolysis; pyruvate from D-glyceraldehyde 3-phosphate: step 4/5.</text>
</comment>
<comment type="subcellular location">
    <subcellularLocation>
        <location evidence="1">Cytoplasm</location>
    </subcellularLocation>
    <subcellularLocation>
        <location evidence="1">Secreted</location>
    </subcellularLocation>
    <subcellularLocation>
        <location evidence="1">Cell surface</location>
    </subcellularLocation>
    <text evidence="1">Fractions of enolase are present in both the cytoplasm and on the cell surface.</text>
</comment>
<comment type="similarity">
    <text evidence="1">Belongs to the enolase family.</text>
</comment>
<comment type="sequence caution" evidence="2">
    <conflict type="erroneous initiation">
        <sequence resource="EMBL-CDS" id="AAO44880"/>
    </conflict>
    <text>Extended N-terminus.</text>
</comment>
<keyword id="KW-0963">Cytoplasm</keyword>
<keyword id="KW-0324">Glycolysis</keyword>
<keyword id="KW-0456">Lyase</keyword>
<keyword id="KW-0460">Magnesium</keyword>
<keyword id="KW-0479">Metal-binding</keyword>
<keyword id="KW-1185">Reference proteome</keyword>
<keyword id="KW-0964">Secreted</keyword>
<accession>Q83FF7</accession>
<proteinExistence type="inferred from homology"/>